<feature type="chain" id="PRO_0000229001" description="Kelch domain-containing protein 8A">
    <location>
        <begin position="1"/>
        <end position="350"/>
    </location>
</feature>
<feature type="repeat" description="Kelch 1">
    <location>
        <begin position="1"/>
        <end position="31"/>
    </location>
</feature>
<feature type="repeat" description="Kelch 2">
    <location>
        <begin position="32"/>
        <end position="79"/>
    </location>
</feature>
<feature type="repeat" description="Kelch 3">
    <location>
        <begin position="81"/>
        <end position="127"/>
    </location>
</feature>
<feature type="repeat" description="Kelch 4">
    <location>
        <begin position="128"/>
        <end position="175"/>
    </location>
</feature>
<feature type="repeat" description="Kelch 5">
    <location>
        <begin position="176"/>
        <end position="222"/>
    </location>
</feature>
<feature type="repeat" description="Kelch 6">
    <location>
        <begin position="224"/>
        <end position="278"/>
    </location>
</feature>
<feature type="repeat" description="Kelch 7">
    <location>
        <begin position="279"/>
        <end position="326"/>
    </location>
</feature>
<feature type="sequence conflict" description="In Ref. 4; AAH36076." evidence="1" ref="4">
    <original>P</original>
    <variation>H</variation>
    <location>
        <position position="160"/>
    </location>
</feature>
<organism>
    <name type="scientific">Homo sapiens</name>
    <name type="common">Human</name>
    <dbReference type="NCBI Taxonomy" id="9606"/>
    <lineage>
        <taxon>Eukaryota</taxon>
        <taxon>Metazoa</taxon>
        <taxon>Chordata</taxon>
        <taxon>Craniata</taxon>
        <taxon>Vertebrata</taxon>
        <taxon>Euteleostomi</taxon>
        <taxon>Mammalia</taxon>
        <taxon>Eutheria</taxon>
        <taxon>Euarchontoglires</taxon>
        <taxon>Primates</taxon>
        <taxon>Haplorrhini</taxon>
        <taxon>Catarrhini</taxon>
        <taxon>Hominidae</taxon>
        <taxon>Homo</taxon>
    </lineage>
</organism>
<dbReference type="EMBL" id="AK001610">
    <property type="protein sequence ID" value="BAA91787.1"/>
    <property type="molecule type" value="mRNA"/>
</dbReference>
<dbReference type="EMBL" id="AK096590">
    <property type="protein sequence ID" value="BAG53332.1"/>
    <property type="molecule type" value="mRNA"/>
</dbReference>
<dbReference type="EMBL" id="AC098933">
    <property type="status" value="NOT_ANNOTATED_CDS"/>
    <property type="molecule type" value="Genomic_DNA"/>
</dbReference>
<dbReference type="EMBL" id="AC098936">
    <property type="status" value="NOT_ANNOTATED_CDS"/>
    <property type="molecule type" value="Genomic_DNA"/>
</dbReference>
<dbReference type="EMBL" id="CH471067">
    <property type="protein sequence ID" value="EAW91550.1"/>
    <property type="molecule type" value="Genomic_DNA"/>
</dbReference>
<dbReference type="EMBL" id="BC036076">
    <property type="protein sequence ID" value="AAH36076.1"/>
    <property type="molecule type" value="mRNA"/>
</dbReference>
<dbReference type="CCDS" id="CCDS30985.1"/>
<dbReference type="RefSeq" id="NP_001258792.1">
    <property type="nucleotide sequence ID" value="NM_001271863.2"/>
</dbReference>
<dbReference type="RefSeq" id="NP_001258793.1">
    <property type="nucleotide sequence ID" value="NM_001271864.2"/>
</dbReference>
<dbReference type="RefSeq" id="NP_001258794.1">
    <property type="nucleotide sequence ID" value="NM_001271865.2"/>
</dbReference>
<dbReference type="RefSeq" id="NP_060673.1">
    <property type="nucleotide sequence ID" value="NM_018203.3"/>
</dbReference>
<dbReference type="RefSeq" id="XP_024303889.1">
    <property type="nucleotide sequence ID" value="XM_024448121.2"/>
</dbReference>
<dbReference type="RefSeq" id="XP_054193398.1">
    <property type="nucleotide sequence ID" value="XM_054337423.1"/>
</dbReference>
<dbReference type="RefSeq" id="XP_054193399.1">
    <property type="nucleotide sequence ID" value="XM_054337424.1"/>
</dbReference>
<dbReference type="SMR" id="Q8IYD2"/>
<dbReference type="BioGRID" id="120516">
    <property type="interactions" value="20"/>
</dbReference>
<dbReference type="FunCoup" id="Q8IYD2">
    <property type="interactions" value="21"/>
</dbReference>
<dbReference type="IntAct" id="Q8IYD2">
    <property type="interactions" value="18"/>
</dbReference>
<dbReference type="STRING" id="9606.ENSP00000356124"/>
<dbReference type="GlyGen" id="Q8IYD2">
    <property type="glycosylation" value="1 site"/>
</dbReference>
<dbReference type="iPTMnet" id="Q8IYD2"/>
<dbReference type="PhosphoSitePlus" id="Q8IYD2"/>
<dbReference type="BioMuta" id="KLHDC8A"/>
<dbReference type="DMDM" id="296434568"/>
<dbReference type="MassIVE" id="Q8IYD2"/>
<dbReference type="PaxDb" id="9606-ENSP00000356124"/>
<dbReference type="PeptideAtlas" id="Q8IYD2"/>
<dbReference type="ProteomicsDB" id="71157"/>
<dbReference type="Antibodypedia" id="20678">
    <property type="antibodies" value="116 antibodies from 21 providers"/>
</dbReference>
<dbReference type="CPTC" id="Q8IYD2">
    <property type="antibodies" value="2 antibodies"/>
</dbReference>
<dbReference type="DNASU" id="55220"/>
<dbReference type="Ensembl" id="ENST00000367155.8">
    <property type="protein sequence ID" value="ENSP00000356123.3"/>
    <property type="gene ID" value="ENSG00000162873.15"/>
</dbReference>
<dbReference type="Ensembl" id="ENST00000367156.7">
    <property type="protein sequence ID" value="ENSP00000356124.3"/>
    <property type="gene ID" value="ENSG00000162873.15"/>
</dbReference>
<dbReference type="Ensembl" id="ENST00000539253.5">
    <property type="protein sequence ID" value="ENSP00000442229.1"/>
    <property type="gene ID" value="ENSG00000162873.15"/>
</dbReference>
<dbReference type="GeneID" id="55220"/>
<dbReference type="KEGG" id="hsa:55220"/>
<dbReference type="MANE-Select" id="ENST00000367155.8">
    <property type="protein sequence ID" value="ENSP00000356123.3"/>
    <property type="RefSeq nucleotide sequence ID" value="NM_018203.3"/>
    <property type="RefSeq protein sequence ID" value="NP_060673.1"/>
</dbReference>
<dbReference type="UCSC" id="uc001hcf.3">
    <property type="organism name" value="human"/>
</dbReference>
<dbReference type="AGR" id="HGNC:25573"/>
<dbReference type="CTD" id="55220"/>
<dbReference type="DisGeNET" id="55220"/>
<dbReference type="GeneCards" id="KLHDC8A"/>
<dbReference type="HGNC" id="HGNC:25573">
    <property type="gene designation" value="KLHDC8A"/>
</dbReference>
<dbReference type="HPA" id="ENSG00000162873">
    <property type="expression patterns" value="Tissue enriched (ovary)"/>
</dbReference>
<dbReference type="MIM" id="614503">
    <property type="type" value="gene"/>
</dbReference>
<dbReference type="neXtProt" id="NX_Q8IYD2"/>
<dbReference type="OpenTargets" id="ENSG00000162873"/>
<dbReference type="PharmGKB" id="PA142671583"/>
<dbReference type="VEuPathDB" id="HostDB:ENSG00000162873"/>
<dbReference type="eggNOG" id="KOG1072">
    <property type="taxonomic scope" value="Eukaryota"/>
</dbReference>
<dbReference type="GeneTree" id="ENSGT00940000160742"/>
<dbReference type="HOGENOM" id="CLU_046864_0_0_1"/>
<dbReference type="InParanoid" id="Q8IYD2"/>
<dbReference type="OMA" id="FPYPVHH"/>
<dbReference type="OrthoDB" id="45365at2759"/>
<dbReference type="PAN-GO" id="Q8IYD2">
    <property type="GO annotations" value="0 GO annotations based on evolutionary models"/>
</dbReference>
<dbReference type="PhylomeDB" id="Q8IYD2"/>
<dbReference type="PathwayCommons" id="Q8IYD2"/>
<dbReference type="SignaLink" id="Q8IYD2"/>
<dbReference type="BioGRID-ORCS" id="55220">
    <property type="hits" value="49 hits in 1146 CRISPR screens"/>
</dbReference>
<dbReference type="ChiTaRS" id="KLHDC8A">
    <property type="organism name" value="human"/>
</dbReference>
<dbReference type="GenomeRNAi" id="55220"/>
<dbReference type="Pharos" id="Q8IYD2">
    <property type="development level" value="Tdark"/>
</dbReference>
<dbReference type="PRO" id="PR:Q8IYD2"/>
<dbReference type="Proteomes" id="UP000005640">
    <property type="component" value="Chromosome 1"/>
</dbReference>
<dbReference type="RNAct" id="Q8IYD2">
    <property type="molecule type" value="protein"/>
</dbReference>
<dbReference type="Bgee" id="ENSG00000162873">
    <property type="expression patterns" value="Expressed in left ovary and 151 other cell types or tissues"/>
</dbReference>
<dbReference type="ExpressionAtlas" id="Q8IYD2">
    <property type="expression patterns" value="baseline and differential"/>
</dbReference>
<dbReference type="Gene3D" id="2.120.10.80">
    <property type="entry name" value="Kelch-type beta propeller"/>
    <property type="match status" value="2"/>
</dbReference>
<dbReference type="InterPro" id="IPR011043">
    <property type="entry name" value="Gal_Oxase/kelch_b-propeller"/>
</dbReference>
<dbReference type="InterPro" id="IPR015915">
    <property type="entry name" value="Kelch-typ_b-propeller"/>
</dbReference>
<dbReference type="InterPro" id="IPR006652">
    <property type="entry name" value="Kelch_1"/>
</dbReference>
<dbReference type="InterPro" id="IPR051746">
    <property type="entry name" value="Kelch_domain_containing_8"/>
</dbReference>
<dbReference type="PANTHER" id="PTHR46260:SF1">
    <property type="entry name" value="KELCH DOMAIN-CONTAINING PROTEIN 8A"/>
    <property type="match status" value="1"/>
</dbReference>
<dbReference type="PANTHER" id="PTHR46260">
    <property type="entry name" value="RING-TYPE DOMAIN-CONTAINING PROTEIN"/>
    <property type="match status" value="1"/>
</dbReference>
<dbReference type="Pfam" id="PF01344">
    <property type="entry name" value="Kelch_1"/>
    <property type="match status" value="2"/>
</dbReference>
<dbReference type="Pfam" id="PF24681">
    <property type="entry name" value="Kelch_KLHDC2_KLHL20_DRC7"/>
    <property type="match status" value="1"/>
</dbReference>
<dbReference type="SMART" id="SM00612">
    <property type="entry name" value="Kelch"/>
    <property type="match status" value="5"/>
</dbReference>
<dbReference type="SUPFAM" id="SSF50965">
    <property type="entry name" value="Galactose oxidase, central domain"/>
    <property type="match status" value="1"/>
</dbReference>
<dbReference type="SUPFAM" id="SSF117281">
    <property type="entry name" value="Kelch motif"/>
    <property type="match status" value="1"/>
</dbReference>
<evidence type="ECO:0000305" key="1"/>
<sequence>MEVPNVKDFQWKRLAPLPSRRVYCSLLETGGQVYAIGGCDDNGVPMDCFEVYSPEADQWTALPRLPTARAGVAVTALGKRIMVIGGVGTNQLPLKVVEMYNIDEGKWKKRSMLREAAMGISVTAKDYRVYAAGGMGLDLRPHNHLQHYDMLKDMWVSLAPMPTPRYAATSFLRGSKIYVLGGRQSKYAVNAFEVFDIETRSWTKFPNIPYKRAFSSFVTLDNHLYSLGGLRQGRLYRQPKFLRTMDVFDMEQGGWLKMERSFFLKKRRADFVAGSLSGRVIVAGGLGNQPTVLETAEAFHPGKNKWEILPAMPTPRCACSSIVVKNCLLAVGGVNQGLSDAVEALCVSDS</sequence>
<comment type="interaction">
    <interactant intactId="EBI-9477915">
        <id>Q8IYD2</id>
    </interactant>
    <interactant intactId="EBI-744342">
        <id>Q8IVD9</id>
        <label>NUDCD3</label>
    </interactant>
    <organismsDiffer>false</organismsDiffer>
    <experiments>3</experiments>
</comment>
<name>KLD8A_HUMAN</name>
<gene>
    <name type="primary">KLHDC8A</name>
</gene>
<keyword id="KW-0880">Kelch repeat</keyword>
<keyword id="KW-1267">Proteomics identification</keyword>
<keyword id="KW-1185">Reference proteome</keyword>
<keyword id="KW-0677">Repeat</keyword>
<reference key="1">
    <citation type="journal article" date="2004" name="Nat. Genet.">
        <title>Complete sequencing and characterization of 21,243 full-length human cDNAs.</title>
        <authorList>
            <person name="Ota T."/>
            <person name="Suzuki Y."/>
            <person name="Nishikawa T."/>
            <person name="Otsuki T."/>
            <person name="Sugiyama T."/>
            <person name="Irie R."/>
            <person name="Wakamatsu A."/>
            <person name="Hayashi K."/>
            <person name="Sato H."/>
            <person name="Nagai K."/>
            <person name="Kimura K."/>
            <person name="Makita H."/>
            <person name="Sekine M."/>
            <person name="Obayashi M."/>
            <person name="Nishi T."/>
            <person name="Shibahara T."/>
            <person name="Tanaka T."/>
            <person name="Ishii S."/>
            <person name="Yamamoto J."/>
            <person name="Saito K."/>
            <person name="Kawai Y."/>
            <person name="Isono Y."/>
            <person name="Nakamura Y."/>
            <person name="Nagahari K."/>
            <person name="Murakami K."/>
            <person name="Yasuda T."/>
            <person name="Iwayanagi T."/>
            <person name="Wagatsuma M."/>
            <person name="Shiratori A."/>
            <person name="Sudo H."/>
            <person name="Hosoiri T."/>
            <person name="Kaku Y."/>
            <person name="Kodaira H."/>
            <person name="Kondo H."/>
            <person name="Sugawara M."/>
            <person name="Takahashi M."/>
            <person name="Kanda K."/>
            <person name="Yokoi T."/>
            <person name="Furuya T."/>
            <person name="Kikkawa E."/>
            <person name="Omura Y."/>
            <person name="Abe K."/>
            <person name="Kamihara K."/>
            <person name="Katsuta N."/>
            <person name="Sato K."/>
            <person name="Tanikawa M."/>
            <person name="Yamazaki M."/>
            <person name="Ninomiya K."/>
            <person name="Ishibashi T."/>
            <person name="Yamashita H."/>
            <person name="Murakawa K."/>
            <person name="Fujimori K."/>
            <person name="Tanai H."/>
            <person name="Kimata M."/>
            <person name="Watanabe M."/>
            <person name="Hiraoka S."/>
            <person name="Chiba Y."/>
            <person name="Ishida S."/>
            <person name="Ono Y."/>
            <person name="Takiguchi S."/>
            <person name="Watanabe S."/>
            <person name="Yosida M."/>
            <person name="Hotuta T."/>
            <person name="Kusano J."/>
            <person name="Kanehori K."/>
            <person name="Takahashi-Fujii A."/>
            <person name="Hara H."/>
            <person name="Tanase T.-O."/>
            <person name="Nomura Y."/>
            <person name="Togiya S."/>
            <person name="Komai F."/>
            <person name="Hara R."/>
            <person name="Takeuchi K."/>
            <person name="Arita M."/>
            <person name="Imose N."/>
            <person name="Musashino K."/>
            <person name="Yuuki H."/>
            <person name="Oshima A."/>
            <person name="Sasaki N."/>
            <person name="Aotsuka S."/>
            <person name="Yoshikawa Y."/>
            <person name="Matsunawa H."/>
            <person name="Ichihara T."/>
            <person name="Shiohata N."/>
            <person name="Sano S."/>
            <person name="Moriya S."/>
            <person name="Momiyama H."/>
            <person name="Satoh N."/>
            <person name="Takami S."/>
            <person name="Terashima Y."/>
            <person name="Suzuki O."/>
            <person name="Nakagawa S."/>
            <person name="Senoh A."/>
            <person name="Mizoguchi H."/>
            <person name="Goto Y."/>
            <person name="Shimizu F."/>
            <person name="Wakebe H."/>
            <person name="Hishigaki H."/>
            <person name="Watanabe T."/>
            <person name="Sugiyama A."/>
            <person name="Takemoto M."/>
            <person name="Kawakami B."/>
            <person name="Yamazaki M."/>
            <person name="Watanabe K."/>
            <person name="Kumagai A."/>
            <person name="Itakura S."/>
            <person name="Fukuzumi Y."/>
            <person name="Fujimori Y."/>
            <person name="Komiyama M."/>
            <person name="Tashiro H."/>
            <person name="Tanigami A."/>
            <person name="Fujiwara T."/>
            <person name="Ono T."/>
            <person name="Yamada K."/>
            <person name="Fujii Y."/>
            <person name="Ozaki K."/>
            <person name="Hirao M."/>
            <person name="Ohmori Y."/>
            <person name="Kawabata A."/>
            <person name="Hikiji T."/>
            <person name="Kobatake N."/>
            <person name="Inagaki H."/>
            <person name="Ikema Y."/>
            <person name="Okamoto S."/>
            <person name="Okitani R."/>
            <person name="Kawakami T."/>
            <person name="Noguchi S."/>
            <person name="Itoh T."/>
            <person name="Shigeta K."/>
            <person name="Senba T."/>
            <person name="Matsumura K."/>
            <person name="Nakajima Y."/>
            <person name="Mizuno T."/>
            <person name="Morinaga M."/>
            <person name="Sasaki M."/>
            <person name="Togashi T."/>
            <person name="Oyama M."/>
            <person name="Hata H."/>
            <person name="Watanabe M."/>
            <person name="Komatsu T."/>
            <person name="Mizushima-Sugano J."/>
            <person name="Satoh T."/>
            <person name="Shirai Y."/>
            <person name="Takahashi Y."/>
            <person name="Nakagawa K."/>
            <person name="Okumura K."/>
            <person name="Nagase T."/>
            <person name="Nomura N."/>
            <person name="Kikuchi H."/>
            <person name="Masuho Y."/>
            <person name="Yamashita R."/>
            <person name="Nakai K."/>
            <person name="Yada T."/>
            <person name="Nakamura Y."/>
            <person name="Ohara O."/>
            <person name="Isogai T."/>
            <person name="Sugano S."/>
        </authorList>
    </citation>
    <scope>NUCLEOTIDE SEQUENCE [LARGE SCALE MRNA]</scope>
    <source>
        <tissue>Brain</tissue>
    </source>
</reference>
<reference key="2">
    <citation type="journal article" date="2006" name="Nature">
        <title>The DNA sequence and biological annotation of human chromosome 1.</title>
        <authorList>
            <person name="Gregory S.G."/>
            <person name="Barlow K.F."/>
            <person name="McLay K.E."/>
            <person name="Kaul R."/>
            <person name="Swarbreck D."/>
            <person name="Dunham A."/>
            <person name="Scott C.E."/>
            <person name="Howe K.L."/>
            <person name="Woodfine K."/>
            <person name="Spencer C.C.A."/>
            <person name="Jones M.C."/>
            <person name="Gillson C."/>
            <person name="Searle S."/>
            <person name="Zhou Y."/>
            <person name="Kokocinski F."/>
            <person name="McDonald L."/>
            <person name="Evans R."/>
            <person name="Phillips K."/>
            <person name="Atkinson A."/>
            <person name="Cooper R."/>
            <person name="Jones C."/>
            <person name="Hall R.E."/>
            <person name="Andrews T.D."/>
            <person name="Lloyd C."/>
            <person name="Ainscough R."/>
            <person name="Almeida J.P."/>
            <person name="Ambrose K.D."/>
            <person name="Anderson F."/>
            <person name="Andrew R.W."/>
            <person name="Ashwell R.I.S."/>
            <person name="Aubin K."/>
            <person name="Babbage A.K."/>
            <person name="Bagguley C.L."/>
            <person name="Bailey J."/>
            <person name="Beasley H."/>
            <person name="Bethel G."/>
            <person name="Bird C.P."/>
            <person name="Bray-Allen S."/>
            <person name="Brown J.Y."/>
            <person name="Brown A.J."/>
            <person name="Buckley D."/>
            <person name="Burton J."/>
            <person name="Bye J."/>
            <person name="Carder C."/>
            <person name="Chapman J.C."/>
            <person name="Clark S.Y."/>
            <person name="Clarke G."/>
            <person name="Clee C."/>
            <person name="Cobley V."/>
            <person name="Collier R.E."/>
            <person name="Corby N."/>
            <person name="Coville G.J."/>
            <person name="Davies J."/>
            <person name="Deadman R."/>
            <person name="Dunn M."/>
            <person name="Earthrowl M."/>
            <person name="Ellington A.G."/>
            <person name="Errington H."/>
            <person name="Frankish A."/>
            <person name="Frankland J."/>
            <person name="French L."/>
            <person name="Garner P."/>
            <person name="Garnett J."/>
            <person name="Gay L."/>
            <person name="Ghori M.R.J."/>
            <person name="Gibson R."/>
            <person name="Gilby L.M."/>
            <person name="Gillett W."/>
            <person name="Glithero R.J."/>
            <person name="Grafham D.V."/>
            <person name="Griffiths C."/>
            <person name="Griffiths-Jones S."/>
            <person name="Grocock R."/>
            <person name="Hammond S."/>
            <person name="Harrison E.S.I."/>
            <person name="Hart E."/>
            <person name="Haugen E."/>
            <person name="Heath P.D."/>
            <person name="Holmes S."/>
            <person name="Holt K."/>
            <person name="Howden P.J."/>
            <person name="Hunt A.R."/>
            <person name="Hunt S.E."/>
            <person name="Hunter G."/>
            <person name="Isherwood J."/>
            <person name="James R."/>
            <person name="Johnson C."/>
            <person name="Johnson D."/>
            <person name="Joy A."/>
            <person name="Kay M."/>
            <person name="Kershaw J.K."/>
            <person name="Kibukawa M."/>
            <person name="Kimberley A.M."/>
            <person name="King A."/>
            <person name="Knights A.J."/>
            <person name="Lad H."/>
            <person name="Laird G."/>
            <person name="Lawlor S."/>
            <person name="Leongamornlert D.A."/>
            <person name="Lloyd D.M."/>
            <person name="Loveland J."/>
            <person name="Lovell J."/>
            <person name="Lush M.J."/>
            <person name="Lyne R."/>
            <person name="Martin S."/>
            <person name="Mashreghi-Mohammadi M."/>
            <person name="Matthews L."/>
            <person name="Matthews N.S.W."/>
            <person name="McLaren S."/>
            <person name="Milne S."/>
            <person name="Mistry S."/>
            <person name="Moore M.J.F."/>
            <person name="Nickerson T."/>
            <person name="O'Dell C.N."/>
            <person name="Oliver K."/>
            <person name="Palmeiri A."/>
            <person name="Palmer S.A."/>
            <person name="Parker A."/>
            <person name="Patel D."/>
            <person name="Pearce A.V."/>
            <person name="Peck A.I."/>
            <person name="Pelan S."/>
            <person name="Phelps K."/>
            <person name="Phillimore B.J."/>
            <person name="Plumb R."/>
            <person name="Rajan J."/>
            <person name="Raymond C."/>
            <person name="Rouse G."/>
            <person name="Saenphimmachak C."/>
            <person name="Sehra H.K."/>
            <person name="Sheridan E."/>
            <person name="Shownkeen R."/>
            <person name="Sims S."/>
            <person name="Skuce C.D."/>
            <person name="Smith M."/>
            <person name="Steward C."/>
            <person name="Subramanian S."/>
            <person name="Sycamore N."/>
            <person name="Tracey A."/>
            <person name="Tromans A."/>
            <person name="Van Helmond Z."/>
            <person name="Wall M."/>
            <person name="Wallis J.M."/>
            <person name="White S."/>
            <person name="Whitehead S.L."/>
            <person name="Wilkinson J.E."/>
            <person name="Willey D.L."/>
            <person name="Williams H."/>
            <person name="Wilming L."/>
            <person name="Wray P.W."/>
            <person name="Wu Z."/>
            <person name="Coulson A."/>
            <person name="Vaudin M."/>
            <person name="Sulston J.E."/>
            <person name="Durbin R.M."/>
            <person name="Hubbard T."/>
            <person name="Wooster R."/>
            <person name="Dunham I."/>
            <person name="Carter N.P."/>
            <person name="McVean G."/>
            <person name="Ross M.T."/>
            <person name="Harrow J."/>
            <person name="Olson M.V."/>
            <person name="Beck S."/>
            <person name="Rogers J."/>
            <person name="Bentley D.R."/>
        </authorList>
    </citation>
    <scope>NUCLEOTIDE SEQUENCE [LARGE SCALE GENOMIC DNA]</scope>
</reference>
<reference key="3">
    <citation type="submission" date="2005-07" db="EMBL/GenBank/DDBJ databases">
        <authorList>
            <person name="Mural R.J."/>
            <person name="Istrail S."/>
            <person name="Sutton G.G."/>
            <person name="Florea L."/>
            <person name="Halpern A.L."/>
            <person name="Mobarry C.M."/>
            <person name="Lippert R."/>
            <person name="Walenz B."/>
            <person name="Shatkay H."/>
            <person name="Dew I."/>
            <person name="Miller J.R."/>
            <person name="Flanigan M.J."/>
            <person name="Edwards N.J."/>
            <person name="Bolanos R."/>
            <person name="Fasulo D."/>
            <person name="Halldorsson B.V."/>
            <person name="Hannenhalli S."/>
            <person name="Turner R."/>
            <person name="Yooseph S."/>
            <person name="Lu F."/>
            <person name="Nusskern D.R."/>
            <person name="Shue B.C."/>
            <person name="Zheng X.H."/>
            <person name="Zhong F."/>
            <person name="Delcher A.L."/>
            <person name="Huson D.H."/>
            <person name="Kravitz S.A."/>
            <person name="Mouchard L."/>
            <person name="Reinert K."/>
            <person name="Remington K.A."/>
            <person name="Clark A.G."/>
            <person name="Waterman M.S."/>
            <person name="Eichler E.E."/>
            <person name="Adams M.D."/>
            <person name="Hunkapiller M.W."/>
            <person name="Myers E.W."/>
            <person name="Venter J.C."/>
        </authorList>
    </citation>
    <scope>NUCLEOTIDE SEQUENCE [LARGE SCALE GENOMIC DNA]</scope>
</reference>
<reference key="4">
    <citation type="journal article" date="2004" name="Genome Res.">
        <title>The status, quality, and expansion of the NIH full-length cDNA project: the Mammalian Gene Collection (MGC).</title>
        <authorList>
            <consortium name="The MGC Project Team"/>
        </authorList>
    </citation>
    <scope>NUCLEOTIDE SEQUENCE [LARGE SCALE MRNA]</scope>
    <source>
        <tissue>Brain</tissue>
    </source>
</reference>
<protein>
    <recommendedName>
        <fullName>Kelch domain-containing protein 8A</fullName>
    </recommendedName>
    <alternativeName>
        <fullName>Substitute for delta-EGFR expression 1</fullName>
        <shortName>S-delta-E1</shortName>
    </alternativeName>
</protein>
<proteinExistence type="evidence at protein level"/>
<accession>Q8IYD2</accession>
<accession>B3KU70</accession>
<accession>Q9NVG5</accession>